<keyword id="KW-1185">Reference proteome</keyword>
<evidence type="ECO:0000305" key="1"/>
<feature type="chain" id="PRO_0000192047" description="Uncharacterized protein HI_0358">
    <location>
        <begin position="1"/>
        <end position="215"/>
    </location>
</feature>
<accession>P44659</accession>
<name>Y358_HAEIN</name>
<reference key="1">
    <citation type="journal article" date="1995" name="Science">
        <title>Whole-genome random sequencing and assembly of Haemophilus influenzae Rd.</title>
        <authorList>
            <person name="Fleischmann R.D."/>
            <person name="Adams M.D."/>
            <person name="White O."/>
            <person name="Clayton R.A."/>
            <person name="Kirkness E.F."/>
            <person name="Kerlavage A.R."/>
            <person name="Bult C.J."/>
            <person name="Tomb J.-F."/>
            <person name="Dougherty B.A."/>
            <person name="Merrick J.M."/>
            <person name="McKenney K."/>
            <person name="Sutton G.G."/>
            <person name="FitzHugh W."/>
            <person name="Fields C.A."/>
            <person name="Gocayne J.D."/>
            <person name="Scott J.D."/>
            <person name="Shirley R."/>
            <person name="Liu L.-I."/>
            <person name="Glodek A."/>
            <person name="Kelley J.M."/>
            <person name="Weidman J.F."/>
            <person name="Phillips C.A."/>
            <person name="Spriggs T."/>
            <person name="Hedblom E."/>
            <person name="Cotton M.D."/>
            <person name="Utterback T.R."/>
            <person name="Hanna M.C."/>
            <person name="Nguyen D.T."/>
            <person name="Saudek D.M."/>
            <person name="Brandon R.C."/>
            <person name="Fine L.D."/>
            <person name="Fritchman J.L."/>
            <person name="Fuhrmann J.L."/>
            <person name="Geoghagen N.S.M."/>
            <person name="Gnehm C.L."/>
            <person name="McDonald L.A."/>
            <person name="Small K.V."/>
            <person name="Fraser C.M."/>
            <person name="Smith H.O."/>
            <person name="Venter J.C."/>
        </authorList>
    </citation>
    <scope>NUCLEOTIDE SEQUENCE [LARGE SCALE GENOMIC DNA]</scope>
    <source>
        <strain>ATCC 51907 / DSM 11121 / KW20 / Rd</strain>
    </source>
</reference>
<organism>
    <name type="scientific">Haemophilus influenzae (strain ATCC 51907 / DSM 11121 / KW20 / Rd)</name>
    <dbReference type="NCBI Taxonomy" id="71421"/>
    <lineage>
        <taxon>Bacteria</taxon>
        <taxon>Pseudomonadati</taxon>
        <taxon>Pseudomonadota</taxon>
        <taxon>Gammaproteobacteria</taxon>
        <taxon>Pasteurellales</taxon>
        <taxon>Pasteurellaceae</taxon>
        <taxon>Haemophilus</taxon>
    </lineage>
</organism>
<proteinExistence type="inferred from homology"/>
<sequence>MIEQLIQQAQPYWQQYIEHEFVQQLAKGTLPKACFQHYLKQDYLYLFHYSRAFALGVFKAKNFAEMETPRKTLEILCQEIQLHLNYCREWGISEQEIFTTQESAACIAYTRYLLDCGMTGSLAELYAAVTPCALGYAQVARYITQHYPRLPNNPYQTWIDTYASEEFQQAAQETVDFLTALCKPLNPSQLAEIQQIFTTATRMEIAFWQMGLDLA</sequence>
<gene>
    <name type="ordered locus">HI_0358</name>
</gene>
<protein>
    <recommendedName>
        <fullName>Uncharacterized protein HI_0358</fullName>
    </recommendedName>
</protein>
<dbReference type="EMBL" id="L42023">
    <property type="protein sequence ID" value="AAC22017.1"/>
    <property type="molecule type" value="Genomic_DNA"/>
</dbReference>
<dbReference type="PIR" id="D64063">
    <property type="entry name" value="D64063"/>
</dbReference>
<dbReference type="RefSeq" id="NP_438520.1">
    <property type="nucleotide sequence ID" value="NC_000907.1"/>
</dbReference>
<dbReference type="SMR" id="P44659"/>
<dbReference type="STRING" id="71421.HI_0358"/>
<dbReference type="DNASU" id="949463"/>
<dbReference type="EnsemblBacteria" id="AAC22017">
    <property type="protein sequence ID" value="AAC22017"/>
    <property type="gene ID" value="HI_0358"/>
</dbReference>
<dbReference type="KEGG" id="hin:HI_0358"/>
<dbReference type="PATRIC" id="fig|71421.8.peg.376"/>
<dbReference type="eggNOG" id="COG0819">
    <property type="taxonomic scope" value="Bacteria"/>
</dbReference>
<dbReference type="HOGENOM" id="CLU_077537_1_0_6"/>
<dbReference type="OrthoDB" id="34166at2"/>
<dbReference type="PhylomeDB" id="P44659"/>
<dbReference type="BioCyc" id="HINF71421:G1GJ1-372-MONOMER"/>
<dbReference type="Proteomes" id="UP000000579">
    <property type="component" value="Chromosome"/>
</dbReference>
<dbReference type="GO" id="GO:0005829">
    <property type="term" value="C:cytosol"/>
    <property type="evidence" value="ECO:0000318"/>
    <property type="project" value="GO_Central"/>
</dbReference>
<dbReference type="GO" id="GO:0050334">
    <property type="term" value="F:thiaminase activity"/>
    <property type="evidence" value="ECO:0007669"/>
    <property type="project" value="InterPro"/>
</dbReference>
<dbReference type="GO" id="GO:0006772">
    <property type="term" value="P:thiamine metabolic process"/>
    <property type="evidence" value="ECO:0007669"/>
    <property type="project" value="InterPro"/>
</dbReference>
<dbReference type="CDD" id="cd19367">
    <property type="entry name" value="TenA_C_ScTHI20-like"/>
    <property type="match status" value="1"/>
</dbReference>
<dbReference type="FunFam" id="1.20.910.10:FF:000025">
    <property type="entry name" value="Aminopyrimidine aminohydrolase"/>
    <property type="match status" value="1"/>
</dbReference>
<dbReference type="Gene3D" id="1.20.910.10">
    <property type="entry name" value="Heme oxygenase-like"/>
    <property type="match status" value="1"/>
</dbReference>
<dbReference type="InterPro" id="IPR016084">
    <property type="entry name" value="Haem_Oase-like_multi-hlx"/>
</dbReference>
<dbReference type="InterPro" id="IPR004305">
    <property type="entry name" value="Thiaminase-2/PQQC"/>
</dbReference>
<dbReference type="InterPro" id="IPR027574">
    <property type="entry name" value="Thiaminase_II"/>
</dbReference>
<dbReference type="InterPro" id="IPR050967">
    <property type="entry name" value="Thiamine_Salvage_TenA"/>
</dbReference>
<dbReference type="NCBIfam" id="TIGR04306">
    <property type="entry name" value="salvage_TenA"/>
    <property type="match status" value="1"/>
</dbReference>
<dbReference type="PANTHER" id="PTHR43198">
    <property type="entry name" value="BIFUNCTIONAL TH2 PROTEIN"/>
    <property type="match status" value="1"/>
</dbReference>
<dbReference type="PANTHER" id="PTHR43198:SF2">
    <property type="entry name" value="SI:CH1073-67J19.1-RELATED"/>
    <property type="match status" value="1"/>
</dbReference>
<dbReference type="Pfam" id="PF03070">
    <property type="entry name" value="TENA_THI-4"/>
    <property type="match status" value="1"/>
</dbReference>
<dbReference type="SUPFAM" id="SSF48613">
    <property type="entry name" value="Heme oxygenase-like"/>
    <property type="match status" value="1"/>
</dbReference>
<comment type="similarity">
    <text evidence="1">Belongs to the thiaminase-2 family.</text>
</comment>